<comment type="function">
    <text evidence="3">BZIP-type transcription factor that functions as either an activator or a suppressor, and which contributes to the regulation of fungal growth, conidiation, cell wall integrity, and virulence (PubMed:25673695). Plays a key role in virulence against insects by mediating cell wall integrity, cell surface hydrophobicity, and adherence to hydrophobic surfaces (PubMed:25673695). Exhibits negative regulation of subtilisin proteases, but positive control of an adhesin gene (PubMed:25673695).</text>
</comment>
<comment type="subcellular location">
    <subcellularLocation>
        <location evidence="3">Nucleus</location>
    </subcellularLocation>
</comment>
<comment type="induction">
    <text evidence="3">Highly expressed during infection structure appressorium formation.</text>
</comment>
<comment type="disruption phenotype">
    <text evidence="3">Alters culture pigmentation and leads to defects in cell wall integrity, adhesion to hydrophobic surfaces, and topical infection of insects.</text>
</comment>
<keyword id="KW-0010">Activator</keyword>
<keyword id="KW-0539">Nucleus</keyword>
<keyword id="KW-0678">Repressor</keyword>
<keyword id="KW-0804">Transcription</keyword>
<keyword id="KW-0805">Transcription regulation</keyword>
<keyword id="KW-0843">Virulence</keyword>
<name>MBZ11_METRA</name>
<evidence type="ECO:0000255" key="1">
    <source>
        <dbReference type="PROSITE-ProRule" id="PRU00978"/>
    </source>
</evidence>
<evidence type="ECO:0000256" key="2">
    <source>
        <dbReference type="SAM" id="MobiDB-lite"/>
    </source>
</evidence>
<evidence type="ECO:0000269" key="3">
    <source>
    </source>
</evidence>
<evidence type="ECO:0000303" key="4">
    <source>
    </source>
</evidence>
<dbReference type="EMBL" id="ADNJ02000001">
    <property type="protein sequence ID" value="EFZ02154.2"/>
    <property type="molecule type" value="Genomic_DNA"/>
</dbReference>
<dbReference type="RefSeq" id="XP_007817925.2">
    <property type="nucleotide sequence ID" value="XM_007819734.2"/>
</dbReference>
<dbReference type="SMR" id="E9EPV1"/>
<dbReference type="GeneID" id="19256022"/>
<dbReference type="KEGG" id="maj:MAA_01736"/>
<dbReference type="HOGENOM" id="CLU_020078_1_0_1"/>
<dbReference type="OrthoDB" id="5571888at2759"/>
<dbReference type="PHI-base" id="PHI:4554"/>
<dbReference type="Proteomes" id="UP000002498">
    <property type="component" value="Unassembled WGS sequence"/>
</dbReference>
<dbReference type="GO" id="GO:0005634">
    <property type="term" value="C:nucleus"/>
    <property type="evidence" value="ECO:0007669"/>
    <property type="project" value="UniProtKB-SubCell"/>
</dbReference>
<dbReference type="GO" id="GO:0003700">
    <property type="term" value="F:DNA-binding transcription factor activity"/>
    <property type="evidence" value="ECO:0007669"/>
    <property type="project" value="InterPro"/>
</dbReference>
<dbReference type="CDD" id="cd14810">
    <property type="entry name" value="bZIP_u1"/>
    <property type="match status" value="1"/>
</dbReference>
<dbReference type="FunFam" id="1.20.5.170:FF:000031">
    <property type="entry name" value="BZIP transcription factor (MeaB)"/>
    <property type="match status" value="1"/>
</dbReference>
<dbReference type="Gene3D" id="1.20.5.170">
    <property type="match status" value="1"/>
</dbReference>
<dbReference type="InterPro" id="IPR004827">
    <property type="entry name" value="bZIP"/>
</dbReference>
<dbReference type="InterPro" id="IPR046347">
    <property type="entry name" value="bZIP_sf"/>
</dbReference>
<dbReference type="PANTHER" id="PTHR37616:SF2">
    <property type="entry name" value="BZIP DOMAIN-CONTAINING PROTEIN"/>
    <property type="match status" value="1"/>
</dbReference>
<dbReference type="PANTHER" id="PTHR37616">
    <property type="entry name" value="BZIP TRANSCRIPTION FACTOR 60-LIKE"/>
    <property type="match status" value="1"/>
</dbReference>
<dbReference type="Pfam" id="PF00170">
    <property type="entry name" value="bZIP_1"/>
    <property type="match status" value="1"/>
</dbReference>
<dbReference type="SMART" id="SM00338">
    <property type="entry name" value="BRLZ"/>
    <property type="match status" value="1"/>
</dbReference>
<dbReference type="SUPFAM" id="SSF57959">
    <property type="entry name" value="Leucine zipper domain"/>
    <property type="match status" value="1"/>
</dbReference>
<dbReference type="PROSITE" id="PS50217">
    <property type="entry name" value="BZIP"/>
    <property type="match status" value="1"/>
</dbReference>
<gene>
    <name evidence="4" type="primary">MBZ1</name>
    <name type="ORF">MAA_01736</name>
</gene>
<reference key="1">
    <citation type="journal article" date="2011" name="PLoS Genet.">
        <title>Genome sequencing and comparative transcriptomics of the model entomopathogenic fungi Metarhizium anisopliae and M. acridum.</title>
        <authorList>
            <person name="Gao Q."/>
            <person name="Jin K."/>
            <person name="Ying S.-H."/>
            <person name="Zhang Y."/>
            <person name="Xiao G."/>
            <person name="Shang Y."/>
            <person name="Duan Z."/>
            <person name="Hu X."/>
            <person name="Xie X.-Q."/>
            <person name="Zhou G."/>
            <person name="Peng G."/>
            <person name="Luo Z."/>
            <person name="Huang W."/>
            <person name="Wang B."/>
            <person name="Fang W."/>
            <person name="Wang S."/>
            <person name="Zhong Y."/>
            <person name="Ma L.-J."/>
            <person name="St Leger R.J."/>
            <person name="Zhao G.-P."/>
            <person name="Pei Y."/>
            <person name="Feng M.-G."/>
            <person name="Xia Y."/>
            <person name="Wang C."/>
        </authorList>
    </citation>
    <scope>NUCLEOTIDE SEQUENCE [LARGE SCALE GENOMIC DNA]</scope>
    <source>
        <strain>ARSEF 23 / ATCC MYA-3075</strain>
    </source>
</reference>
<reference key="2">
    <citation type="journal article" date="2014" name="Proc. Natl. Acad. Sci. U.S.A.">
        <title>Trajectory and genomic determinants of fungal-pathogen speciation and host adaptation.</title>
        <authorList>
            <person name="Hu X."/>
            <person name="Xiao G."/>
            <person name="Zheng P."/>
            <person name="Shang Y."/>
            <person name="Su Y."/>
            <person name="Zhang X."/>
            <person name="Liu X."/>
            <person name="Zhan S."/>
            <person name="St Leger R.J."/>
            <person name="Wang C."/>
        </authorList>
    </citation>
    <scope>GENOME REANNOTATION</scope>
    <source>
        <strain>ARSEF 23 / ATCC MYA-3075</strain>
    </source>
</reference>
<reference key="3">
    <citation type="journal article" date="2015" name="J. Biol. Chem.">
        <title>Basic leucine zipper (bZIP) domain transcription factor MBZ1 regulates cell wall integrity, spore adherence, and virulence in Metarhizium robertsii.</title>
        <authorList>
            <person name="Huang W."/>
            <person name="Shang Y."/>
            <person name="Chen P."/>
            <person name="Cen K."/>
            <person name="Wang C."/>
        </authorList>
    </citation>
    <scope>FUNCTION</scope>
    <scope>DISRUPTION PHENOTYPE</scope>
    <scope>SUBCELLULAR LOCATION</scope>
    <scope>INDUCTION</scope>
</reference>
<proteinExistence type="evidence at transcript level"/>
<organism>
    <name type="scientific">Metarhizium robertsii (strain ARSEF 23 / ATCC MYA-3075)</name>
    <name type="common">Metarhizium anisopliae (strain ARSEF 23)</name>
    <dbReference type="NCBI Taxonomy" id="655844"/>
    <lineage>
        <taxon>Eukaryota</taxon>
        <taxon>Fungi</taxon>
        <taxon>Dikarya</taxon>
        <taxon>Ascomycota</taxon>
        <taxon>Pezizomycotina</taxon>
        <taxon>Sordariomycetes</taxon>
        <taxon>Hypocreomycetidae</taxon>
        <taxon>Hypocreales</taxon>
        <taxon>Clavicipitaceae</taxon>
        <taxon>Metarhizium</taxon>
    </lineage>
</organism>
<feature type="chain" id="PRO_0000435640" description="BZIP-type transcription factor MBZ1">
    <location>
        <begin position="1"/>
        <end position="557"/>
    </location>
</feature>
<feature type="domain" description="bZIP" evidence="1">
    <location>
        <begin position="264"/>
        <end position="327"/>
    </location>
</feature>
<feature type="region of interest" description="Disordered" evidence="2">
    <location>
        <begin position="171"/>
        <end position="209"/>
    </location>
</feature>
<feature type="region of interest" description="Disordered" evidence="2">
    <location>
        <begin position="221"/>
        <end position="273"/>
    </location>
</feature>
<feature type="region of interest" description="Basic motif" evidence="1">
    <location>
        <begin position="267"/>
        <end position="286"/>
    </location>
</feature>
<feature type="region of interest" description="Leucine-zipper" evidence="1">
    <location>
        <begin position="289"/>
        <end position="296"/>
    </location>
</feature>
<feature type="region of interest" description="Disordered" evidence="2">
    <location>
        <begin position="344"/>
        <end position="364"/>
    </location>
</feature>
<feature type="compositionally biased region" description="Low complexity" evidence="2">
    <location>
        <begin position="171"/>
        <end position="194"/>
    </location>
</feature>
<feature type="compositionally biased region" description="Polar residues" evidence="2">
    <location>
        <begin position="229"/>
        <end position="240"/>
    </location>
</feature>
<feature type="compositionally biased region" description="Basic and acidic residues" evidence="2">
    <location>
        <begin position="254"/>
        <end position="271"/>
    </location>
</feature>
<protein>
    <recommendedName>
        <fullName evidence="4">BZIP-type transcription factor MBZ1</fullName>
    </recommendedName>
</protein>
<sequence>MSTSSQTIDVDALLDFSACDGSYNSPSLSPSTASKPTFASPVTAAVSTPSLPSTTQTLSGPSHNYDMYRQQTGFVPGALTNTMAVNQTNNTGYQDFGSLDYLSSFSPENDVFDFNASPSQGTMEMEFESPADSQFFPTVNPSSIQHDTSALSQTSSVGRLWPGAHSQAALAKAQAQQRQQQQQQQLIQQTQRQTSPKSRGKAPQPTDPIVEQKITQLLNSMRAKPASNEPESQSVLNNLPKSKKDEEEMDEDERLLASEEGKKLSSKERRQLRNKVSARAFRSRRKEYISQLEAEIANKVNENGDLRSQNRALMDENKRLSDLTRMLLSSPSFSTFLDNLSANPTGLPQGSPVKIEQNPQQEQNQVPKDVNAYNSQFSSQQQIGMAMIPEQTMDFSLLSLGNTYNFQPQVFVVDTPEVPNAIDASVLSGKTSNFVEESFSSDDEKVEVPVIERPLKTKAIETPEAPVDEEFESDPEFALFHSEPATTTTTPKDIDTENLTGIDLFGGIESEKMFARYELVNATEEEATAAFAMARVQRISASIDSVVSRLELLTMDI</sequence>
<accession>E9EPV1</accession>